<evidence type="ECO:0000256" key="1">
    <source>
        <dbReference type="SAM" id="MobiDB-lite"/>
    </source>
</evidence>
<evidence type="ECO:0000269" key="2">
    <source>
    </source>
</evidence>
<evidence type="ECO:0000303" key="3">
    <source>
    </source>
</evidence>
<name>YSDD_ECOLI</name>
<gene>
    <name evidence="3" type="primary">ysdD</name>
    <name type="ordered locus">b4757</name>
</gene>
<feature type="chain" id="PRO_0000445186" description="Protein YsdD">
    <location>
        <begin position="1"/>
        <end position="26"/>
    </location>
</feature>
<feature type="region of interest" description="Disordered" evidence="1">
    <location>
        <begin position="1"/>
        <end position="26"/>
    </location>
</feature>
<keyword id="KW-1185">Reference proteome</keyword>
<proteinExistence type="evidence at protein level"/>
<sequence length="26" mass="3112">MTIDKNWLNRSNKDPGRSLRFTHQPV</sequence>
<reference key="1">
    <citation type="journal article" date="1997" name="Science">
        <title>The complete genome sequence of Escherichia coli K-12.</title>
        <authorList>
            <person name="Blattner F.R."/>
            <person name="Plunkett G. III"/>
            <person name="Bloch C.A."/>
            <person name="Perna N.T."/>
            <person name="Burland V."/>
            <person name="Riley M."/>
            <person name="Collado-Vides J."/>
            <person name="Glasner J.D."/>
            <person name="Rode C.K."/>
            <person name="Mayhew G.F."/>
            <person name="Gregor J."/>
            <person name="Davis N.W."/>
            <person name="Kirkpatrick H.A."/>
            <person name="Goeden M.A."/>
            <person name="Rose D.J."/>
            <person name="Mau B."/>
            <person name="Shao Y."/>
        </authorList>
    </citation>
    <scope>NUCLEOTIDE SEQUENCE [LARGE SCALE GENOMIC DNA]</scope>
    <source>
        <strain>K12 / MG1655 / ATCC 47076</strain>
    </source>
</reference>
<reference key="2">
    <citation type="journal article" date="2018" name="Proteomics">
        <title>Identifying new small proteins in Escherichia coli.</title>
        <authorList>
            <person name="VanOrsdel C.E."/>
            <person name="Kelly J.P."/>
            <person name="Burke B.N."/>
            <person name="Lein C.D."/>
            <person name="Oufiero C.E."/>
            <person name="Sanchez J.F."/>
            <person name="Wimmers L.E."/>
            <person name="Hearn D.J."/>
            <person name="Abuikhdair F.J."/>
            <person name="Barnhart K.R."/>
            <person name="Duley M.L."/>
            <person name="Ernst S.E.G."/>
            <person name="Kenerson B.A."/>
            <person name="Serafin A.J."/>
            <person name="Hemm M.R."/>
        </authorList>
    </citation>
    <scope>IDENTIFICATION</scope>
    <scope>INDUCTION</scope>
</reference>
<dbReference type="EMBL" id="U00096">
    <property type="protein sequence ID" value="AYC08254.1"/>
    <property type="molecule type" value="Genomic_DNA"/>
</dbReference>
<dbReference type="EnsemblBacteria" id="AYC08254">
    <property type="protein sequence ID" value="AYC08254"/>
    <property type="gene ID" value="b4757"/>
</dbReference>
<dbReference type="InParanoid" id="P0DPP8"/>
<dbReference type="BioCyc" id="EcoCyc:MONOMER0-4435"/>
<dbReference type="PRO" id="PR:P0DPP8"/>
<dbReference type="Proteomes" id="UP000000625">
    <property type="component" value="Chromosome"/>
</dbReference>
<dbReference type="Pfam" id="PF23700">
    <property type="entry name" value="YsdD"/>
    <property type="match status" value="1"/>
</dbReference>
<protein>
    <recommendedName>
        <fullName evidence="3">Protein YsdD</fullName>
    </recommendedName>
</protein>
<accession>P0DPP8</accession>
<accession>A0A385XJQ8</accession>
<organism>
    <name type="scientific">Escherichia coli (strain K12)</name>
    <dbReference type="NCBI Taxonomy" id="83333"/>
    <lineage>
        <taxon>Bacteria</taxon>
        <taxon>Pseudomonadati</taxon>
        <taxon>Pseudomonadota</taxon>
        <taxon>Gammaproteobacteria</taxon>
        <taxon>Enterobacterales</taxon>
        <taxon>Enterobacteriaceae</taxon>
        <taxon>Escherichia</taxon>
    </lineage>
</organism>
<comment type="induction">
    <text evidence="2">Expressed during stationary phase (at protein level).</text>
</comment>